<protein>
    <recommendedName>
        <fullName>Orotidine 5'-phosphate decarboxylase</fullName>
        <ecNumber>4.1.1.23</ecNumber>
    </recommendedName>
    <alternativeName>
        <fullName>OMP decarboxylase</fullName>
        <shortName>OMPDCase</shortName>
        <shortName>OMPdecase</shortName>
    </alternativeName>
    <alternativeName>
        <fullName>Uridine 5'-monophosphate synthase</fullName>
        <shortName>UMP synthase</shortName>
    </alternativeName>
</protein>
<keyword id="KW-0210">Decarboxylase</keyword>
<keyword id="KW-0456">Lyase</keyword>
<keyword id="KW-0665">Pyrimidine biosynthesis</keyword>
<accession>Q9C131</accession>
<comment type="catalytic activity">
    <reaction evidence="2">
        <text>orotidine 5'-phosphate + H(+) = UMP + CO2</text>
        <dbReference type="Rhea" id="RHEA:11596"/>
        <dbReference type="ChEBI" id="CHEBI:15378"/>
        <dbReference type="ChEBI" id="CHEBI:16526"/>
        <dbReference type="ChEBI" id="CHEBI:57538"/>
        <dbReference type="ChEBI" id="CHEBI:57865"/>
        <dbReference type="EC" id="4.1.1.23"/>
    </reaction>
</comment>
<comment type="pathway">
    <text>Pyrimidine metabolism; UMP biosynthesis via de novo pathway; UMP from orotate: step 2/2.</text>
</comment>
<comment type="similarity">
    <text evidence="3">Belongs to the OMP decarboxylase family.</text>
</comment>
<sequence>MSSQSHIPYAVRASRHSNPLARQLFQIAEEKKSNVVVSADVTTSKELLDLADRLGPYITVLKTHIDILTDLSPTTLTSLKSLASKHRFLLFEDRKFVDIGSTVQKQYHGGSLRISEWAHIVNCAMLAGPGIVDALAQTASTPEFRSVYANEVEGGRALLILAEMTSKGSMATGAYTQLSVEAARRHRAFVLGFVATRALNDVLPVSTVDGDEEDFVVFTTGVSLSASGDALGQQYQTPTSAVERGADFIISGRGIYAAEDPLEAVLRYREEGWKAYLERVKGWKA</sequence>
<organism>
    <name type="scientific">Paracoccidioides brasiliensis</name>
    <dbReference type="NCBI Taxonomy" id="121759"/>
    <lineage>
        <taxon>Eukaryota</taxon>
        <taxon>Fungi</taxon>
        <taxon>Dikarya</taxon>
        <taxon>Ascomycota</taxon>
        <taxon>Pezizomycotina</taxon>
        <taxon>Eurotiomycetes</taxon>
        <taxon>Eurotiomycetidae</taxon>
        <taxon>Onygenales</taxon>
        <taxon>Ajellomycetaceae</taxon>
        <taxon>Paracoccidioides</taxon>
    </lineage>
</organism>
<reference key="1">
    <citation type="submission" date="1999-03" db="EMBL/GenBank/DDBJ databases">
        <title>Isolation and cloning of the URA3 gene of Paracoccidioides brasiliensis.</title>
        <authorList>
            <person name="Reinoso C."/>
            <person name="Fermignan E."/>
        </authorList>
    </citation>
    <scope>NUCLEOTIDE SEQUENCE [GENOMIC DNA]</scope>
    <source>
        <strain>ATCC 32071 / IVIC Pb73 / C81</strain>
    </source>
</reference>
<proteinExistence type="inferred from homology"/>
<evidence type="ECO:0000250" key="1"/>
<evidence type="ECO:0000255" key="2">
    <source>
        <dbReference type="PROSITE-ProRule" id="PRU10110"/>
    </source>
</evidence>
<evidence type="ECO:0000305" key="3"/>
<feature type="chain" id="PRO_0000134667" description="Orotidine 5'-phosphate decarboxylase">
    <location>
        <begin position="1"/>
        <end position="285"/>
    </location>
</feature>
<feature type="active site" description="Proton donor" evidence="2">
    <location>
        <position position="95"/>
    </location>
</feature>
<feature type="binding site" evidence="1">
    <location>
        <position position="40"/>
    </location>
    <ligand>
        <name>substrate</name>
    </ligand>
</feature>
<feature type="binding site" evidence="1">
    <location>
        <begin position="62"/>
        <end position="64"/>
    </location>
    <ligand>
        <name>substrate</name>
    </ligand>
</feature>
<feature type="binding site" evidence="1">
    <location>
        <begin position="93"/>
        <end position="102"/>
    </location>
    <ligand>
        <name>substrate</name>
    </ligand>
</feature>
<feature type="binding site" evidence="1">
    <location>
        <position position="235"/>
    </location>
    <ligand>
        <name>substrate</name>
    </ligand>
</feature>
<feature type="binding site" evidence="1">
    <location>
        <position position="253"/>
    </location>
    <ligand>
        <name>substrate</name>
    </ligand>
</feature>
<name>PYRF_PARBR</name>
<dbReference type="EC" id="4.1.1.23"/>
<dbReference type="EMBL" id="AJ133782">
    <property type="protein sequence ID" value="CAC34740.1"/>
    <property type="molecule type" value="Genomic_DNA"/>
</dbReference>
<dbReference type="SMR" id="Q9C131"/>
<dbReference type="VEuPathDB" id="FungiDB:PABG_07260"/>
<dbReference type="VEuPathDB" id="FungiDB:PADG_05225"/>
<dbReference type="OrthoDB" id="10263753at2759"/>
<dbReference type="BRENDA" id="4.1.1.23">
    <property type="organism ID" value="6937"/>
</dbReference>
<dbReference type="UniPathway" id="UPA00070">
    <property type="reaction ID" value="UER00120"/>
</dbReference>
<dbReference type="GO" id="GO:0005829">
    <property type="term" value="C:cytosol"/>
    <property type="evidence" value="ECO:0007669"/>
    <property type="project" value="TreeGrafter"/>
</dbReference>
<dbReference type="GO" id="GO:0004590">
    <property type="term" value="F:orotidine-5'-phosphate decarboxylase activity"/>
    <property type="evidence" value="ECO:0007669"/>
    <property type="project" value="UniProtKB-EC"/>
</dbReference>
<dbReference type="GO" id="GO:0006207">
    <property type="term" value="P:'de novo' pyrimidine nucleobase biosynthetic process"/>
    <property type="evidence" value="ECO:0007669"/>
    <property type="project" value="InterPro"/>
</dbReference>
<dbReference type="GO" id="GO:0044205">
    <property type="term" value="P:'de novo' UMP biosynthetic process"/>
    <property type="evidence" value="ECO:0007669"/>
    <property type="project" value="UniProtKB-UniPathway"/>
</dbReference>
<dbReference type="CDD" id="cd04725">
    <property type="entry name" value="OMP_decarboxylase_like"/>
    <property type="match status" value="1"/>
</dbReference>
<dbReference type="FunFam" id="3.20.20.70:FF:000114">
    <property type="entry name" value="Decarboxylase,orotidine phosphate"/>
    <property type="match status" value="1"/>
</dbReference>
<dbReference type="Gene3D" id="3.20.20.70">
    <property type="entry name" value="Aldolase class I"/>
    <property type="match status" value="1"/>
</dbReference>
<dbReference type="InterPro" id="IPR013785">
    <property type="entry name" value="Aldolase_TIM"/>
</dbReference>
<dbReference type="InterPro" id="IPR014732">
    <property type="entry name" value="OMPdecase"/>
</dbReference>
<dbReference type="InterPro" id="IPR018089">
    <property type="entry name" value="OMPdecase_AS"/>
</dbReference>
<dbReference type="InterPro" id="IPR001754">
    <property type="entry name" value="OMPdeCOase_dom"/>
</dbReference>
<dbReference type="InterPro" id="IPR011060">
    <property type="entry name" value="RibuloseP-bd_barrel"/>
</dbReference>
<dbReference type="NCBIfam" id="TIGR01740">
    <property type="entry name" value="pyrF"/>
    <property type="match status" value="1"/>
</dbReference>
<dbReference type="PANTHER" id="PTHR32119">
    <property type="entry name" value="OROTIDINE 5'-PHOSPHATE DECARBOXYLASE"/>
    <property type="match status" value="1"/>
</dbReference>
<dbReference type="PANTHER" id="PTHR32119:SF2">
    <property type="entry name" value="OROTIDINE 5'-PHOSPHATE DECARBOXYLASE"/>
    <property type="match status" value="1"/>
</dbReference>
<dbReference type="Pfam" id="PF00215">
    <property type="entry name" value="OMPdecase"/>
    <property type="match status" value="1"/>
</dbReference>
<dbReference type="SMART" id="SM00934">
    <property type="entry name" value="OMPdecase"/>
    <property type="match status" value="1"/>
</dbReference>
<dbReference type="SUPFAM" id="SSF51366">
    <property type="entry name" value="Ribulose-phoshate binding barrel"/>
    <property type="match status" value="1"/>
</dbReference>
<dbReference type="PROSITE" id="PS00156">
    <property type="entry name" value="OMPDECASE"/>
    <property type="match status" value="1"/>
</dbReference>
<gene>
    <name type="primary">URA3</name>
</gene>